<dbReference type="EMBL" id="CP001359">
    <property type="protein sequence ID" value="ACL67821.1"/>
    <property type="molecule type" value="Genomic_DNA"/>
</dbReference>
<dbReference type="RefSeq" id="WP_015935498.1">
    <property type="nucleotide sequence ID" value="NC_011891.1"/>
</dbReference>
<dbReference type="SMR" id="B8JCV1"/>
<dbReference type="KEGG" id="acp:A2cp1_4504"/>
<dbReference type="HOGENOM" id="CLU_050669_0_1_7"/>
<dbReference type="Proteomes" id="UP000007089">
    <property type="component" value="Chromosome"/>
</dbReference>
<dbReference type="GO" id="GO:0005886">
    <property type="term" value="C:plasma membrane"/>
    <property type="evidence" value="ECO:0007669"/>
    <property type="project" value="UniProtKB-SubCell"/>
</dbReference>
<dbReference type="GO" id="GO:0045259">
    <property type="term" value="C:proton-transporting ATP synthase complex"/>
    <property type="evidence" value="ECO:0007669"/>
    <property type="project" value="UniProtKB-KW"/>
</dbReference>
<dbReference type="GO" id="GO:0005524">
    <property type="term" value="F:ATP binding"/>
    <property type="evidence" value="ECO:0007669"/>
    <property type="project" value="UniProtKB-UniRule"/>
</dbReference>
<dbReference type="GO" id="GO:0046933">
    <property type="term" value="F:proton-transporting ATP synthase activity, rotational mechanism"/>
    <property type="evidence" value="ECO:0007669"/>
    <property type="project" value="UniProtKB-UniRule"/>
</dbReference>
<dbReference type="GO" id="GO:0042777">
    <property type="term" value="P:proton motive force-driven plasma membrane ATP synthesis"/>
    <property type="evidence" value="ECO:0007669"/>
    <property type="project" value="UniProtKB-UniRule"/>
</dbReference>
<dbReference type="CDD" id="cd12151">
    <property type="entry name" value="F1-ATPase_gamma"/>
    <property type="match status" value="1"/>
</dbReference>
<dbReference type="FunFam" id="1.10.287.80:FF:000003">
    <property type="entry name" value="ATP synthase gamma chain, chloroplastic"/>
    <property type="match status" value="1"/>
</dbReference>
<dbReference type="Gene3D" id="3.40.1380.10">
    <property type="match status" value="1"/>
</dbReference>
<dbReference type="Gene3D" id="1.10.287.80">
    <property type="entry name" value="ATP synthase, gamma subunit, helix hairpin domain"/>
    <property type="match status" value="2"/>
</dbReference>
<dbReference type="HAMAP" id="MF_00815">
    <property type="entry name" value="ATP_synth_gamma_bact"/>
    <property type="match status" value="1"/>
</dbReference>
<dbReference type="InterPro" id="IPR035968">
    <property type="entry name" value="ATP_synth_F1_ATPase_gsu"/>
</dbReference>
<dbReference type="InterPro" id="IPR000131">
    <property type="entry name" value="ATP_synth_F1_gsu"/>
</dbReference>
<dbReference type="InterPro" id="IPR023632">
    <property type="entry name" value="ATP_synth_F1_gsu_CS"/>
</dbReference>
<dbReference type="NCBIfam" id="TIGR01146">
    <property type="entry name" value="ATPsyn_F1gamma"/>
    <property type="match status" value="1"/>
</dbReference>
<dbReference type="PANTHER" id="PTHR11693">
    <property type="entry name" value="ATP SYNTHASE GAMMA CHAIN"/>
    <property type="match status" value="1"/>
</dbReference>
<dbReference type="PANTHER" id="PTHR11693:SF22">
    <property type="entry name" value="ATP SYNTHASE SUBUNIT GAMMA, MITOCHONDRIAL"/>
    <property type="match status" value="1"/>
</dbReference>
<dbReference type="Pfam" id="PF00231">
    <property type="entry name" value="ATP-synt"/>
    <property type="match status" value="1"/>
</dbReference>
<dbReference type="PRINTS" id="PR00126">
    <property type="entry name" value="ATPASEGAMMA"/>
</dbReference>
<dbReference type="SUPFAM" id="SSF52943">
    <property type="entry name" value="ATP synthase (F1-ATPase), gamma subunit"/>
    <property type="match status" value="1"/>
</dbReference>
<dbReference type="PROSITE" id="PS00153">
    <property type="entry name" value="ATPASE_GAMMA"/>
    <property type="match status" value="1"/>
</dbReference>
<reference key="1">
    <citation type="submission" date="2009-01" db="EMBL/GenBank/DDBJ databases">
        <title>Complete sequence of Anaeromyxobacter dehalogenans 2CP-1.</title>
        <authorList>
            <person name="Lucas S."/>
            <person name="Copeland A."/>
            <person name="Lapidus A."/>
            <person name="Glavina del Rio T."/>
            <person name="Dalin E."/>
            <person name="Tice H."/>
            <person name="Bruce D."/>
            <person name="Goodwin L."/>
            <person name="Pitluck S."/>
            <person name="Saunders E."/>
            <person name="Brettin T."/>
            <person name="Detter J.C."/>
            <person name="Han C."/>
            <person name="Larimer F."/>
            <person name="Land M."/>
            <person name="Hauser L."/>
            <person name="Kyrpides N."/>
            <person name="Ovchinnikova G."/>
            <person name="Beliaev A.S."/>
            <person name="Richardson P."/>
        </authorList>
    </citation>
    <scope>NUCLEOTIDE SEQUENCE [LARGE SCALE GENOMIC DNA]</scope>
    <source>
        <strain>2CP-1 / ATCC BAA-258</strain>
    </source>
</reference>
<accession>B8JCV1</accession>
<protein>
    <recommendedName>
        <fullName evidence="1">ATP synthase gamma chain</fullName>
    </recommendedName>
    <alternativeName>
        <fullName evidence="1">ATP synthase F1 sector gamma subunit</fullName>
    </alternativeName>
    <alternativeName>
        <fullName evidence="1">F-ATPase gamma subunit</fullName>
    </alternativeName>
</protein>
<name>ATPG_ANAD2</name>
<sequence length="290" mass="32114">MPSLRDIRNRIGSVRSTRQITKAMKMVSAAKLRRAQDAVLKTRPYAVLLDQTLSRLAARAAAEEQVAHPLLAPRAQRTAEVVVVTSDRGLAGGFNSNICRFVQRFLTENADRFERIALSTVGKKGREYFKARRLDIRKDYTGVHANLAYEKAEALAREATERYLAGEVDAVFLAYNEFKSAISQKQVVVQLLPIDTSAAGADATGIDFKYEPSREALLAELLPRHVAMQVWRALLESAASEHGARMSAMESATKNAEEMIASLSLQYNRARQAYVTKELMEIVGGAEALK</sequence>
<gene>
    <name evidence="1" type="primary">atpG</name>
    <name type="ordered locus">A2cp1_4504</name>
</gene>
<proteinExistence type="inferred from homology"/>
<feature type="chain" id="PRO_1000148595" description="ATP synthase gamma chain">
    <location>
        <begin position="1"/>
        <end position="290"/>
    </location>
</feature>
<organism>
    <name type="scientific">Anaeromyxobacter dehalogenans (strain 2CP-1 / ATCC BAA-258)</name>
    <dbReference type="NCBI Taxonomy" id="455488"/>
    <lineage>
        <taxon>Bacteria</taxon>
        <taxon>Pseudomonadati</taxon>
        <taxon>Myxococcota</taxon>
        <taxon>Myxococcia</taxon>
        <taxon>Myxococcales</taxon>
        <taxon>Cystobacterineae</taxon>
        <taxon>Anaeromyxobacteraceae</taxon>
        <taxon>Anaeromyxobacter</taxon>
    </lineage>
</organism>
<keyword id="KW-0066">ATP synthesis</keyword>
<keyword id="KW-0997">Cell inner membrane</keyword>
<keyword id="KW-1003">Cell membrane</keyword>
<keyword id="KW-0139">CF(1)</keyword>
<keyword id="KW-0375">Hydrogen ion transport</keyword>
<keyword id="KW-0406">Ion transport</keyword>
<keyword id="KW-0472">Membrane</keyword>
<keyword id="KW-0813">Transport</keyword>
<evidence type="ECO:0000255" key="1">
    <source>
        <dbReference type="HAMAP-Rule" id="MF_00815"/>
    </source>
</evidence>
<comment type="function">
    <text evidence="1">Produces ATP from ADP in the presence of a proton gradient across the membrane. The gamma chain is believed to be important in regulating ATPase activity and the flow of protons through the CF(0) complex.</text>
</comment>
<comment type="subunit">
    <text evidence="1">F-type ATPases have 2 components, CF(1) - the catalytic core - and CF(0) - the membrane proton channel. CF(1) has five subunits: alpha(3), beta(3), gamma(1), delta(1), epsilon(1). CF(0) has three main subunits: a, b and c.</text>
</comment>
<comment type="subcellular location">
    <subcellularLocation>
        <location evidence="1">Cell inner membrane</location>
        <topology evidence="1">Peripheral membrane protein</topology>
    </subcellularLocation>
</comment>
<comment type="similarity">
    <text evidence="1">Belongs to the ATPase gamma chain family.</text>
</comment>